<keyword id="KW-0131">Cell cycle</keyword>
<keyword id="KW-0132">Cell division</keyword>
<keyword id="KW-1003">Cell membrane</keyword>
<keyword id="KW-0133">Cell shape</keyword>
<keyword id="KW-0961">Cell wall biogenesis/degradation</keyword>
<keyword id="KW-0460">Magnesium</keyword>
<keyword id="KW-0472">Membrane</keyword>
<keyword id="KW-0479">Metal-binding</keyword>
<keyword id="KW-0573">Peptidoglycan synthesis</keyword>
<keyword id="KW-0808">Transferase</keyword>
<keyword id="KW-0812">Transmembrane</keyword>
<keyword id="KW-1133">Transmembrane helix</keyword>
<accession>A1UI57</accession>
<proteinExistence type="inferred from homology"/>
<dbReference type="EC" id="2.7.8.13" evidence="1"/>
<dbReference type="EMBL" id="CP000518">
    <property type="protein sequence ID" value="ABL92515.1"/>
    <property type="molecule type" value="Genomic_DNA"/>
</dbReference>
<dbReference type="SMR" id="A1UI57"/>
<dbReference type="STRING" id="189918.Mkms_3321"/>
<dbReference type="KEGG" id="mkm:Mkms_3321"/>
<dbReference type="HOGENOM" id="CLU_023982_0_1_11"/>
<dbReference type="OrthoDB" id="9805475at2"/>
<dbReference type="UniPathway" id="UPA00219"/>
<dbReference type="GO" id="GO:0005886">
    <property type="term" value="C:plasma membrane"/>
    <property type="evidence" value="ECO:0007669"/>
    <property type="project" value="UniProtKB-SubCell"/>
</dbReference>
<dbReference type="GO" id="GO:0046872">
    <property type="term" value="F:metal ion binding"/>
    <property type="evidence" value="ECO:0007669"/>
    <property type="project" value="UniProtKB-KW"/>
</dbReference>
<dbReference type="GO" id="GO:0008963">
    <property type="term" value="F:phospho-N-acetylmuramoyl-pentapeptide-transferase activity"/>
    <property type="evidence" value="ECO:0007669"/>
    <property type="project" value="UniProtKB-UniRule"/>
</dbReference>
<dbReference type="GO" id="GO:0051992">
    <property type="term" value="F:UDP-N-acetylmuramoyl-L-alanyl-D-glutamyl-meso-2,6-diaminopimelyl-D-alanyl-D-alanine:undecaprenyl-phosphate transferase activity"/>
    <property type="evidence" value="ECO:0007669"/>
    <property type="project" value="RHEA"/>
</dbReference>
<dbReference type="GO" id="GO:0051301">
    <property type="term" value="P:cell division"/>
    <property type="evidence" value="ECO:0007669"/>
    <property type="project" value="UniProtKB-KW"/>
</dbReference>
<dbReference type="GO" id="GO:0071555">
    <property type="term" value="P:cell wall organization"/>
    <property type="evidence" value="ECO:0007669"/>
    <property type="project" value="UniProtKB-KW"/>
</dbReference>
<dbReference type="GO" id="GO:0009252">
    <property type="term" value="P:peptidoglycan biosynthetic process"/>
    <property type="evidence" value="ECO:0007669"/>
    <property type="project" value="UniProtKB-UniRule"/>
</dbReference>
<dbReference type="GO" id="GO:0008360">
    <property type="term" value="P:regulation of cell shape"/>
    <property type="evidence" value="ECO:0007669"/>
    <property type="project" value="UniProtKB-KW"/>
</dbReference>
<dbReference type="CDD" id="cd06852">
    <property type="entry name" value="GT_MraY"/>
    <property type="match status" value="1"/>
</dbReference>
<dbReference type="HAMAP" id="MF_00038">
    <property type="entry name" value="MraY"/>
    <property type="match status" value="1"/>
</dbReference>
<dbReference type="InterPro" id="IPR000715">
    <property type="entry name" value="Glycosyl_transferase_4"/>
</dbReference>
<dbReference type="InterPro" id="IPR003524">
    <property type="entry name" value="PNAcMuramoyl-5peptid_Trfase"/>
</dbReference>
<dbReference type="InterPro" id="IPR018480">
    <property type="entry name" value="PNAcMuramoyl-5peptid_Trfase_CS"/>
</dbReference>
<dbReference type="NCBIfam" id="TIGR00445">
    <property type="entry name" value="mraY"/>
    <property type="match status" value="1"/>
</dbReference>
<dbReference type="PANTHER" id="PTHR22926">
    <property type="entry name" value="PHOSPHO-N-ACETYLMURAMOYL-PENTAPEPTIDE-TRANSFERASE"/>
    <property type="match status" value="1"/>
</dbReference>
<dbReference type="PANTHER" id="PTHR22926:SF5">
    <property type="entry name" value="PHOSPHO-N-ACETYLMURAMOYL-PENTAPEPTIDE-TRANSFERASE HOMOLOG"/>
    <property type="match status" value="1"/>
</dbReference>
<dbReference type="Pfam" id="PF00953">
    <property type="entry name" value="Glycos_transf_4"/>
    <property type="match status" value="1"/>
</dbReference>
<dbReference type="Pfam" id="PF10555">
    <property type="entry name" value="MraY_sig1"/>
    <property type="match status" value="1"/>
</dbReference>
<dbReference type="PROSITE" id="PS01347">
    <property type="entry name" value="MRAY_1"/>
    <property type="match status" value="1"/>
</dbReference>
<dbReference type="PROSITE" id="PS01348">
    <property type="entry name" value="MRAY_2"/>
    <property type="match status" value="1"/>
</dbReference>
<name>MRAY_MYCSK</name>
<sequence length="359" mass="37686">MRQILIAVGLALAVSILLTPVLIRLFTRQGFGHEIREDGPPTHHKKRGTPSMGGVAILAGIWVSYLGTHLVGLALDGEGPSASGLLVLGLATALGIVGFIDDLIKIRRARNLGLNKTAKTVGILAAALLFGVLALQFGNADGLTPGSPELSYVREIATVTLAPMIFVLFCVVLVSAWSNAVNFTDGLDGLAAGAMAMVCAAYVLITFWQYRNACATSPGLGCYNVRDPLDLALVAAAAAGACIGFLWWNAAPAKIFMGDTGSLALGGIIAGLSVTSRTEILAVVLGALFVAEVTSVVVQILAFRTTGRRVFRMAPFHHHFELVGWAETTVIIRFWLLTAIACGLGVALFYGEWLTAVGA</sequence>
<reference key="1">
    <citation type="submission" date="2006-12" db="EMBL/GenBank/DDBJ databases">
        <title>Complete sequence of chromosome of Mycobacterium sp. KMS.</title>
        <authorList>
            <consortium name="US DOE Joint Genome Institute"/>
            <person name="Copeland A."/>
            <person name="Lucas S."/>
            <person name="Lapidus A."/>
            <person name="Barry K."/>
            <person name="Detter J.C."/>
            <person name="Glavina del Rio T."/>
            <person name="Hammon N."/>
            <person name="Israni S."/>
            <person name="Dalin E."/>
            <person name="Tice H."/>
            <person name="Pitluck S."/>
            <person name="Kiss H."/>
            <person name="Brettin T."/>
            <person name="Bruce D."/>
            <person name="Han C."/>
            <person name="Tapia R."/>
            <person name="Gilna P."/>
            <person name="Schmutz J."/>
            <person name="Larimer F."/>
            <person name="Land M."/>
            <person name="Hauser L."/>
            <person name="Kyrpides N."/>
            <person name="Mikhailova N."/>
            <person name="Miller C.D."/>
            <person name="Richardson P."/>
        </authorList>
    </citation>
    <scope>NUCLEOTIDE SEQUENCE [LARGE SCALE GENOMIC DNA]</scope>
    <source>
        <strain>KMS</strain>
    </source>
</reference>
<evidence type="ECO:0000255" key="1">
    <source>
        <dbReference type="HAMAP-Rule" id="MF_00038"/>
    </source>
</evidence>
<feature type="chain" id="PRO_1000003014" description="Phospho-N-acetylmuramoyl-pentapeptide-transferase">
    <location>
        <begin position="1"/>
        <end position="359"/>
    </location>
</feature>
<feature type="transmembrane region" description="Helical" evidence="1">
    <location>
        <begin position="3"/>
        <end position="23"/>
    </location>
</feature>
<feature type="transmembrane region" description="Helical" evidence="1">
    <location>
        <begin position="55"/>
        <end position="75"/>
    </location>
</feature>
<feature type="transmembrane region" description="Helical" evidence="1">
    <location>
        <begin position="84"/>
        <end position="104"/>
    </location>
</feature>
<feature type="transmembrane region" description="Helical" evidence="1">
    <location>
        <begin position="120"/>
        <end position="140"/>
    </location>
</feature>
<feature type="transmembrane region" description="Helical" evidence="1">
    <location>
        <begin position="156"/>
        <end position="176"/>
    </location>
</feature>
<feature type="transmembrane region" description="Helical" evidence="1">
    <location>
        <begin position="187"/>
        <end position="207"/>
    </location>
</feature>
<feature type="transmembrane region" description="Helical" evidence="1">
    <location>
        <begin position="231"/>
        <end position="251"/>
    </location>
</feature>
<feature type="transmembrane region" description="Helical" evidence="1">
    <location>
        <begin position="255"/>
        <end position="275"/>
    </location>
</feature>
<feature type="transmembrane region" description="Helical" evidence="1">
    <location>
        <begin position="280"/>
        <end position="300"/>
    </location>
</feature>
<feature type="transmembrane region" description="Helical" evidence="1">
    <location>
        <begin position="334"/>
        <end position="354"/>
    </location>
</feature>
<protein>
    <recommendedName>
        <fullName evidence="1">Phospho-N-acetylmuramoyl-pentapeptide-transferase</fullName>
        <ecNumber evidence="1">2.7.8.13</ecNumber>
    </recommendedName>
    <alternativeName>
        <fullName evidence="1">UDP-MurNAc-pentapeptide phosphotransferase</fullName>
    </alternativeName>
</protein>
<comment type="function">
    <text evidence="1">Catalyzes the initial step of the lipid cycle reactions in the biosynthesis of the cell wall peptidoglycan: transfers peptidoglycan precursor phospho-MurNAc-pentapeptide from UDP-MurNAc-pentapeptide onto the lipid carrier undecaprenyl phosphate, yielding undecaprenyl-pyrophosphoryl-MurNAc-pentapeptide, known as lipid I.</text>
</comment>
<comment type="catalytic activity">
    <reaction evidence="1">
        <text>UDP-N-acetyl-alpha-D-muramoyl-L-alanyl-gamma-D-glutamyl-meso-2,6-diaminopimeloyl-D-alanyl-D-alanine + di-trans,octa-cis-undecaprenyl phosphate = di-trans,octa-cis-undecaprenyl diphospho-N-acetyl-alpha-D-muramoyl-L-alanyl-D-glutamyl-meso-2,6-diaminopimeloyl-D-alanyl-D-alanine + UMP</text>
        <dbReference type="Rhea" id="RHEA:28386"/>
        <dbReference type="ChEBI" id="CHEBI:57865"/>
        <dbReference type="ChEBI" id="CHEBI:60392"/>
        <dbReference type="ChEBI" id="CHEBI:61386"/>
        <dbReference type="ChEBI" id="CHEBI:61387"/>
        <dbReference type="EC" id="2.7.8.13"/>
    </reaction>
</comment>
<comment type="cofactor">
    <cofactor evidence="1">
        <name>Mg(2+)</name>
        <dbReference type="ChEBI" id="CHEBI:18420"/>
    </cofactor>
</comment>
<comment type="pathway">
    <text evidence="1">Cell wall biogenesis; peptidoglycan biosynthesis.</text>
</comment>
<comment type="subcellular location">
    <subcellularLocation>
        <location evidence="1">Cell membrane</location>
        <topology evidence="1">Multi-pass membrane protein</topology>
    </subcellularLocation>
</comment>
<comment type="similarity">
    <text evidence="1">Belongs to the glycosyltransferase 4 family. MraY subfamily.</text>
</comment>
<organism>
    <name type="scientific">Mycobacterium sp. (strain KMS)</name>
    <dbReference type="NCBI Taxonomy" id="189918"/>
    <lineage>
        <taxon>Bacteria</taxon>
        <taxon>Bacillati</taxon>
        <taxon>Actinomycetota</taxon>
        <taxon>Actinomycetes</taxon>
        <taxon>Mycobacteriales</taxon>
        <taxon>Mycobacteriaceae</taxon>
        <taxon>Mycobacterium</taxon>
    </lineage>
</organism>
<gene>
    <name evidence="1" type="primary">mraY</name>
    <name type="ordered locus">Mkms_3321</name>
</gene>